<protein>
    <recommendedName>
        <fullName>Serine--tRNA ligase, cytoplasmic</fullName>
        <ecNumber>6.1.1.11</ecNumber>
    </recommendedName>
    <alternativeName>
        <fullName>Seryl-tRNA synthetase</fullName>
        <shortName>SerRS</shortName>
    </alternativeName>
    <alternativeName>
        <fullName>Seryl-tRNA(Ser/Sec) synthetase</fullName>
    </alternativeName>
</protein>
<comment type="function">
    <text evidence="1">Catalyzes the attachment of serine to tRNA(Ser). Is also able to aminoacylate tRNA(Sec) with serine, to form the misacylated tRNA L-seryl-tRNA(Sec), which will be further converted into selenocysteinyl-tRNA(Sec) (By similarity).</text>
</comment>
<comment type="catalytic activity">
    <reaction>
        <text>tRNA(Ser) + L-serine + ATP = L-seryl-tRNA(Ser) + AMP + diphosphate + H(+)</text>
        <dbReference type="Rhea" id="RHEA:12292"/>
        <dbReference type="Rhea" id="RHEA-COMP:9669"/>
        <dbReference type="Rhea" id="RHEA-COMP:9703"/>
        <dbReference type="ChEBI" id="CHEBI:15378"/>
        <dbReference type="ChEBI" id="CHEBI:30616"/>
        <dbReference type="ChEBI" id="CHEBI:33019"/>
        <dbReference type="ChEBI" id="CHEBI:33384"/>
        <dbReference type="ChEBI" id="CHEBI:78442"/>
        <dbReference type="ChEBI" id="CHEBI:78533"/>
        <dbReference type="ChEBI" id="CHEBI:456215"/>
        <dbReference type="EC" id="6.1.1.11"/>
    </reaction>
</comment>
<comment type="catalytic activity">
    <reaction>
        <text>tRNA(Sec) + L-serine + ATP = L-seryl-tRNA(Sec) + AMP + diphosphate + H(+)</text>
        <dbReference type="Rhea" id="RHEA:42580"/>
        <dbReference type="Rhea" id="RHEA-COMP:9742"/>
        <dbReference type="Rhea" id="RHEA-COMP:10128"/>
        <dbReference type="ChEBI" id="CHEBI:15378"/>
        <dbReference type="ChEBI" id="CHEBI:30616"/>
        <dbReference type="ChEBI" id="CHEBI:33019"/>
        <dbReference type="ChEBI" id="CHEBI:33384"/>
        <dbReference type="ChEBI" id="CHEBI:78442"/>
        <dbReference type="ChEBI" id="CHEBI:78533"/>
        <dbReference type="ChEBI" id="CHEBI:456215"/>
        <dbReference type="EC" id="6.1.1.11"/>
    </reaction>
</comment>
<comment type="pathway">
    <text>Aminoacyl-tRNA biosynthesis; selenocysteinyl-tRNA(Sec) biosynthesis; L-seryl-tRNA(Sec) from L-serine and tRNA(Sec): step 1/1.</text>
</comment>
<comment type="subunit">
    <text evidence="1">Homodimer. The tRNA molecule binds across the dimer (By similarity).</text>
</comment>
<comment type="subcellular location">
    <subcellularLocation>
        <location>Cytoplasm</location>
    </subcellularLocation>
</comment>
<comment type="domain">
    <text evidence="1">Consists of two distinct domains, a catalytic core and a N-terminal extension that is involved in tRNA binding.</text>
</comment>
<comment type="similarity">
    <text evidence="2">Belongs to the class-II aminoacyl-tRNA synthetase family. Type-1 seryl-tRNA synthetase subfamily.</text>
</comment>
<accession>Q7KWQ2</accession>
<accession>Q558S3</accession>
<gene>
    <name type="primary">serS</name>
    <name type="ORF">DDB_G0272660</name>
</gene>
<organism>
    <name type="scientific">Dictyostelium discoideum</name>
    <name type="common">Social amoeba</name>
    <dbReference type="NCBI Taxonomy" id="44689"/>
    <lineage>
        <taxon>Eukaryota</taxon>
        <taxon>Amoebozoa</taxon>
        <taxon>Evosea</taxon>
        <taxon>Eumycetozoa</taxon>
        <taxon>Dictyostelia</taxon>
        <taxon>Dictyosteliales</taxon>
        <taxon>Dictyosteliaceae</taxon>
        <taxon>Dictyostelium</taxon>
    </lineage>
</organism>
<sequence length="451" mass="51578">MGLDIVLFRADKGGNPDLIRQSQKVRYANVDAVQEVIDLDKVVKETKYRLDNTNAEYAKLNKSVAMKKKAGESADEIIAQAEELNQSIIKLKAEVSEVELLLRKKLRPIGNIVHESVPIDNNEDNNQIIKTWGECKTSEGLLHHHELLEMIDGYDPERGTLVSGHRCYFLKGIGVLLNQAIINFALMHMTKRGSVPLQTPFFMNKDVMAKTAQLEQFDDELYKVTGDNEEKYLIATSEQPISAFHQDEWIEEKDLPKKYVGYSTCFRKEAGSHGRDTWGIFRVHQFEKIEQFCITEPEKSWDMMEEMINNSEQFYQELGIPYRVVNIVSGALNNAASKKYDLEGWFPGYNQYRELVSCSNCTDYQSRDLEIRCGMKKQGQQQKKYVHMLNSTLAATTRVICCILENYQTEGGITVPVPLRPYLGKDFIPFVKAAPKQKAIPKQKTTTPEQK</sequence>
<dbReference type="EC" id="6.1.1.11"/>
<dbReference type="EMBL" id="AAFI02000008">
    <property type="protein sequence ID" value="EAL70967.1"/>
    <property type="molecule type" value="Genomic_DNA"/>
</dbReference>
<dbReference type="RefSeq" id="XP_644993.1">
    <property type="nucleotide sequence ID" value="XM_639901.1"/>
</dbReference>
<dbReference type="SMR" id="Q7KWQ2"/>
<dbReference type="FunCoup" id="Q7KWQ2">
    <property type="interactions" value="786"/>
</dbReference>
<dbReference type="STRING" id="44689.Q7KWQ2"/>
<dbReference type="PaxDb" id="44689-DDB0231305"/>
<dbReference type="EnsemblProtists" id="EAL70967">
    <property type="protein sequence ID" value="EAL70967"/>
    <property type="gene ID" value="DDB_G0272660"/>
</dbReference>
<dbReference type="GeneID" id="8618670"/>
<dbReference type="KEGG" id="ddi:DDB_G0272660"/>
<dbReference type="dictyBase" id="DDB_G0272660">
    <property type="gene designation" value="serS"/>
</dbReference>
<dbReference type="VEuPathDB" id="AmoebaDB:DDB_G0272660"/>
<dbReference type="eggNOG" id="KOG2509">
    <property type="taxonomic scope" value="Eukaryota"/>
</dbReference>
<dbReference type="HOGENOM" id="CLU_023797_0_1_1"/>
<dbReference type="InParanoid" id="Q7KWQ2"/>
<dbReference type="OMA" id="GYTPCFR"/>
<dbReference type="PhylomeDB" id="Q7KWQ2"/>
<dbReference type="UniPathway" id="UPA00906">
    <property type="reaction ID" value="UER00895"/>
</dbReference>
<dbReference type="PRO" id="PR:Q7KWQ2"/>
<dbReference type="Proteomes" id="UP000002195">
    <property type="component" value="Chromosome 2"/>
</dbReference>
<dbReference type="GO" id="GO:0005829">
    <property type="term" value="C:cytosol"/>
    <property type="evidence" value="ECO:0000250"/>
    <property type="project" value="UniProtKB"/>
</dbReference>
<dbReference type="GO" id="GO:0045335">
    <property type="term" value="C:phagocytic vesicle"/>
    <property type="evidence" value="ECO:0007005"/>
    <property type="project" value="dictyBase"/>
</dbReference>
<dbReference type="GO" id="GO:0005524">
    <property type="term" value="F:ATP binding"/>
    <property type="evidence" value="ECO:0007669"/>
    <property type="project" value="UniProtKB-KW"/>
</dbReference>
<dbReference type="GO" id="GO:0004828">
    <property type="term" value="F:serine-tRNA ligase activity"/>
    <property type="evidence" value="ECO:0000250"/>
    <property type="project" value="UniProtKB"/>
</dbReference>
<dbReference type="GO" id="GO:0000049">
    <property type="term" value="F:tRNA binding"/>
    <property type="evidence" value="ECO:0000318"/>
    <property type="project" value="GO_Central"/>
</dbReference>
<dbReference type="GO" id="GO:0002181">
    <property type="term" value="P:cytoplasmic translation"/>
    <property type="evidence" value="ECO:0000250"/>
    <property type="project" value="UniProtKB"/>
</dbReference>
<dbReference type="GO" id="GO:0006434">
    <property type="term" value="P:seryl-tRNA aminoacylation"/>
    <property type="evidence" value="ECO:0000250"/>
    <property type="project" value="UniProtKB"/>
</dbReference>
<dbReference type="CDD" id="cd00770">
    <property type="entry name" value="SerRS_core"/>
    <property type="match status" value="1"/>
</dbReference>
<dbReference type="FunFam" id="3.30.930.10:FF:000026">
    <property type="entry name" value="Seryl-tRNA synthetase, cytoplasmic"/>
    <property type="match status" value="1"/>
</dbReference>
<dbReference type="Gene3D" id="3.30.930.10">
    <property type="entry name" value="Bira Bifunctional Protein, Domain 2"/>
    <property type="match status" value="1"/>
</dbReference>
<dbReference type="Gene3D" id="1.10.287.40">
    <property type="entry name" value="Serine-tRNA synthetase, tRNA binding domain"/>
    <property type="match status" value="1"/>
</dbReference>
<dbReference type="InterPro" id="IPR002314">
    <property type="entry name" value="aa-tRNA-synt_IIb"/>
</dbReference>
<dbReference type="InterPro" id="IPR006195">
    <property type="entry name" value="aa-tRNA-synth_II"/>
</dbReference>
<dbReference type="InterPro" id="IPR045864">
    <property type="entry name" value="aa-tRNA-synth_II/BPL/LPL"/>
</dbReference>
<dbReference type="InterPro" id="IPR002317">
    <property type="entry name" value="Ser-tRNA-ligase_type_1"/>
</dbReference>
<dbReference type="InterPro" id="IPR015866">
    <property type="entry name" value="Ser-tRNA-synth_1_N"/>
</dbReference>
<dbReference type="InterPro" id="IPR042103">
    <property type="entry name" value="SerRS_1_N_sf"/>
</dbReference>
<dbReference type="InterPro" id="IPR033729">
    <property type="entry name" value="SerRS_core"/>
</dbReference>
<dbReference type="InterPro" id="IPR010978">
    <property type="entry name" value="tRNA-bd_arm"/>
</dbReference>
<dbReference type="NCBIfam" id="TIGR00414">
    <property type="entry name" value="serS"/>
    <property type="match status" value="1"/>
</dbReference>
<dbReference type="PANTHER" id="PTHR11778">
    <property type="entry name" value="SERYL-TRNA SYNTHETASE"/>
    <property type="match status" value="1"/>
</dbReference>
<dbReference type="Pfam" id="PF02403">
    <property type="entry name" value="Seryl_tRNA_N"/>
    <property type="match status" value="1"/>
</dbReference>
<dbReference type="Pfam" id="PF00587">
    <property type="entry name" value="tRNA-synt_2b"/>
    <property type="match status" value="1"/>
</dbReference>
<dbReference type="PIRSF" id="PIRSF001529">
    <property type="entry name" value="Ser-tRNA-synth_IIa"/>
    <property type="match status" value="1"/>
</dbReference>
<dbReference type="PRINTS" id="PR00981">
    <property type="entry name" value="TRNASYNTHSER"/>
</dbReference>
<dbReference type="SUPFAM" id="SSF55681">
    <property type="entry name" value="Class II aaRS and biotin synthetases"/>
    <property type="match status" value="1"/>
</dbReference>
<dbReference type="SUPFAM" id="SSF46589">
    <property type="entry name" value="tRNA-binding arm"/>
    <property type="match status" value="1"/>
</dbReference>
<dbReference type="PROSITE" id="PS50862">
    <property type="entry name" value="AA_TRNA_LIGASE_II"/>
    <property type="match status" value="1"/>
</dbReference>
<name>SYSC_DICDI</name>
<proteinExistence type="evidence at protein level"/>
<evidence type="ECO:0000250" key="1"/>
<evidence type="ECO:0000305" key="2"/>
<reference key="1">
    <citation type="journal article" date="2002" name="Nature">
        <title>Sequence and analysis of chromosome 2 of Dictyostelium discoideum.</title>
        <authorList>
            <person name="Gloeckner G."/>
            <person name="Eichinger L."/>
            <person name="Szafranski K."/>
            <person name="Pachebat J.A."/>
            <person name="Bankier A.T."/>
            <person name="Dear P.H."/>
            <person name="Lehmann R."/>
            <person name="Baumgart C."/>
            <person name="Parra G."/>
            <person name="Abril J.F."/>
            <person name="Guigo R."/>
            <person name="Kumpf K."/>
            <person name="Tunggal B."/>
            <person name="Cox E.C."/>
            <person name="Quail M.A."/>
            <person name="Platzer M."/>
            <person name="Rosenthal A."/>
            <person name="Noegel A.A."/>
        </authorList>
    </citation>
    <scope>NUCLEOTIDE SEQUENCE [LARGE SCALE GENOMIC DNA]</scope>
    <source>
        <strain>AX4</strain>
    </source>
</reference>
<reference key="2">
    <citation type="journal article" date="2005" name="Nature">
        <title>The genome of the social amoeba Dictyostelium discoideum.</title>
        <authorList>
            <person name="Eichinger L."/>
            <person name="Pachebat J.A."/>
            <person name="Gloeckner G."/>
            <person name="Rajandream M.A."/>
            <person name="Sucgang R."/>
            <person name="Berriman M."/>
            <person name="Song J."/>
            <person name="Olsen R."/>
            <person name="Szafranski K."/>
            <person name="Xu Q."/>
            <person name="Tunggal B."/>
            <person name="Kummerfeld S."/>
            <person name="Madera M."/>
            <person name="Konfortov B.A."/>
            <person name="Rivero F."/>
            <person name="Bankier A.T."/>
            <person name="Lehmann R."/>
            <person name="Hamlin N."/>
            <person name="Davies R."/>
            <person name="Gaudet P."/>
            <person name="Fey P."/>
            <person name="Pilcher K."/>
            <person name="Chen G."/>
            <person name="Saunders D."/>
            <person name="Sodergren E.J."/>
            <person name="Davis P."/>
            <person name="Kerhornou A."/>
            <person name="Nie X."/>
            <person name="Hall N."/>
            <person name="Anjard C."/>
            <person name="Hemphill L."/>
            <person name="Bason N."/>
            <person name="Farbrother P."/>
            <person name="Desany B."/>
            <person name="Just E."/>
            <person name="Morio T."/>
            <person name="Rost R."/>
            <person name="Churcher C.M."/>
            <person name="Cooper J."/>
            <person name="Haydock S."/>
            <person name="van Driessche N."/>
            <person name="Cronin A."/>
            <person name="Goodhead I."/>
            <person name="Muzny D.M."/>
            <person name="Mourier T."/>
            <person name="Pain A."/>
            <person name="Lu M."/>
            <person name="Harper D."/>
            <person name="Lindsay R."/>
            <person name="Hauser H."/>
            <person name="James K.D."/>
            <person name="Quiles M."/>
            <person name="Madan Babu M."/>
            <person name="Saito T."/>
            <person name="Buchrieser C."/>
            <person name="Wardroper A."/>
            <person name="Felder M."/>
            <person name="Thangavelu M."/>
            <person name="Johnson D."/>
            <person name="Knights A."/>
            <person name="Loulseged H."/>
            <person name="Mungall K.L."/>
            <person name="Oliver K."/>
            <person name="Price C."/>
            <person name="Quail M.A."/>
            <person name="Urushihara H."/>
            <person name="Hernandez J."/>
            <person name="Rabbinowitsch E."/>
            <person name="Steffen D."/>
            <person name="Sanders M."/>
            <person name="Ma J."/>
            <person name="Kohara Y."/>
            <person name="Sharp S."/>
            <person name="Simmonds M.N."/>
            <person name="Spiegler S."/>
            <person name="Tivey A."/>
            <person name="Sugano S."/>
            <person name="White B."/>
            <person name="Walker D."/>
            <person name="Woodward J.R."/>
            <person name="Winckler T."/>
            <person name="Tanaka Y."/>
            <person name="Shaulsky G."/>
            <person name="Schleicher M."/>
            <person name="Weinstock G.M."/>
            <person name="Rosenthal A."/>
            <person name="Cox E.C."/>
            <person name="Chisholm R.L."/>
            <person name="Gibbs R.A."/>
            <person name="Loomis W.F."/>
            <person name="Platzer M."/>
            <person name="Kay R.R."/>
            <person name="Williams J.G."/>
            <person name="Dear P.H."/>
            <person name="Noegel A.A."/>
            <person name="Barrell B.G."/>
            <person name="Kuspa A."/>
        </authorList>
    </citation>
    <scope>NUCLEOTIDE SEQUENCE [LARGE SCALE GENOMIC DNA]</scope>
    <source>
        <strain>AX4</strain>
    </source>
</reference>
<reference key="3">
    <citation type="journal article" date="2006" name="Mol. Cell. Proteomics">
        <title>Proteomics fingerprinting of phagosome maturation and evidence for the role of a Galpha during uptake.</title>
        <authorList>
            <person name="Gotthardt D."/>
            <person name="Blancheteau V."/>
            <person name="Bosserhoff A."/>
            <person name="Ruppert T."/>
            <person name="Delorenzi M."/>
            <person name="Soldati T."/>
        </authorList>
    </citation>
    <scope>IDENTIFICATION BY MASS SPECTROMETRY [LARGE SCALE ANALYSIS]</scope>
    <source>
        <strain>AX2</strain>
    </source>
</reference>
<feature type="chain" id="PRO_0000328594" description="Serine--tRNA ligase, cytoplasmic">
    <location>
        <begin position="1"/>
        <end position="451"/>
    </location>
</feature>
<feature type="binding site" evidence="1">
    <location>
        <begin position="236"/>
        <end position="238"/>
    </location>
    <ligand>
        <name>L-serine</name>
        <dbReference type="ChEBI" id="CHEBI:33384"/>
    </ligand>
</feature>
<feature type="binding site" evidence="1">
    <location>
        <begin position="267"/>
        <end position="269"/>
    </location>
    <ligand>
        <name>ATP</name>
        <dbReference type="ChEBI" id="CHEBI:30616"/>
    </ligand>
</feature>
<feature type="binding site" evidence="1">
    <location>
        <position position="283"/>
    </location>
    <ligand>
        <name>ATP</name>
        <dbReference type="ChEBI" id="CHEBI:30616"/>
    </ligand>
</feature>
<feature type="binding site" evidence="1">
    <location>
        <position position="290"/>
    </location>
    <ligand>
        <name>L-serine</name>
        <dbReference type="ChEBI" id="CHEBI:33384"/>
    </ligand>
</feature>
<feature type="binding site" evidence="1">
    <location>
        <begin position="354"/>
        <end position="357"/>
    </location>
    <ligand>
        <name>ATP</name>
        <dbReference type="ChEBI" id="CHEBI:30616"/>
    </ligand>
</feature>
<feature type="binding site" evidence="1">
    <location>
        <position position="392"/>
    </location>
    <ligand>
        <name>L-serine</name>
        <dbReference type="ChEBI" id="CHEBI:33384"/>
    </ligand>
</feature>
<keyword id="KW-0030">Aminoacyl-tRNA synthetase</keyword>
<keyword id="KW-0067">ATP-binding</keyword>
<keyword id="KW-0963">Cytoplasm</keyword>
<keyword id="KW-0436">Ligase</keyword>
<keyword id="KW-0547">Nucleotide-binding</keyword>
<keyword id="KW-0648">Protein biosynthesis</keyword>
<keyword id="KW-1185">Reference proteome</keyword>